<organism>
    <name type="scientific">Homo sapiens</name>
    <name type="common">Human</name>
    <dbReference type="NCBI Taxonomy" id="9606"/>
    <lineage>
        <taxon>Eukaryota</taxon>
        <taxon>Metazoa</taxon>
        <taxon>Chordata</taxon>
        <taxon>Craniata</taxon>
        <taxon>Vertebrata</taxon>
        <taxon>Euteleostomi</taxon>
        <taxon>Mammalia</taxon>
        <taxon>Eutheria</taxon>
        <taxon>Euarchontoglires</taxon>
        <taxon>Primates</taxon>
        <taxon>Haplorrhini</taxon>
        <taxon>Catarrhini</taxon>
        <taxon>Hominidae</taxon>
        <taxon>Homo</taxon>
    </lineage>
</organism>
<dbReference type="EMBL" id="Y08915">
    <property type="protein sequence ID" value="CAA70119.1"/>
    <property type="molecule type" value="mRNA"/>
</dbReference>
<dbReference type="EMBL" id="BT006736">
    <property type="protein sequence ID" value="AAP35382.1"/>
    <property type="molecule type" value="mRNA"/>
</dbReference>
<dbReference type="EMBL" id="AL139111">
    <property type="status" value="NOT_ANNOTATED_CDS"/>
    <property type="molecule type" value="Genomic_DNA"/>
</dbReference>
<dbReference type="EMBL" id="AL158141">
    <property type="status" value="NOT_ANNOTATED_CDS"/>
    <property type="molecule type" value="Genomic_DNA"/>
</dbReference>
<dbReference type="EMBL" id="BC004137">
    <property type="protein sequence ID" value="AAH04137.1"/>
    <property type="molecule type" value="mRNA"/>
</dbReference>
<dbReference type="CCDS" id="CCDS14396.1"/>
<dbReference type="RefSeq" id="NP_001357121.1">
    <property type="nucleotide sequence ID" value="NM_001370192.1"/>
</dbReference>
<dbReference type="RefSeq" id="NP_001357122.1">
    <property type="nucleotide sequence ID" value="NM_001370193.1"/>
</dbReference>
<dbReference type="RefSeq" id="NP_001542.1">
    <property type="nucleotide sequence ID" value="NM_001551.3"/>
</dbReference>
<dbReference type="RefSeq" id="XP_016884978.1">
    <property type="nucleotide sequence ID" value="XM_017029489.1"/>
</dbReference>
<dbReference type="PDB" id="4IYP">
    <property type="method" value="X-ray"/>
    <property type="resolution" value="2.80 A"/>
    <property type="chains" value="A=2-234"/>
</dbReference>
<dbReference type="PDBsum" id="4IYP"/>
<dbReference type="SMR" id="P78318"/>
<dbReference type="BioGRID" id="109698">
    <property type="interactions" value="169"/>
</dbReference>
<dbReference type="CORUM" id="P78318"/>
<dbReference type="FunCoup" id="P78318">
    <property type="interactions" value="1845"/>
</dbReference>
<dbReference type="IntAct" id="P78318">
    <property type="interactions" value="57"/>
</dbReference>
<dbReference type="MINT" id="P78318"/>
<dbReference type="STRING" id="9606.ENSP00000363661"/>
<dbReference type="CarbonylDB" id="P78318"/>
<dbReference type="GlyGen" id="P78318">
    <property type="glycosylation" value="1 site, 1 O-linked glycan (1 site)"/>
</dbReference>
<dbReference type="iPTMnet" id="P78318"/>
<dbReference type="MetOSite" id="P78318"/>
<dbReference type="PhosphoSitePlus" id="P78318"/>
<dbReference type="BioMuta" id="IGBP1"/>
<dbReference type="DMDM" id="14285501"/>
<dbReference type="jPOST" id="P78318"/>
<dbReference type="MassIVE" id="P78318"/>
<dbReference type="PaxDb" id="9606-ENSP00000363661"/>
<dbReference type="PeptideAtlas" id="P78318"/>
<dbReference type="ProteomicsDB" id="57563"/>
<dbReference type="Pumba" id="P78318"/>
<dbReference type="Antibodypedia" id="359">
    <property type="antibodies" value="249 antibodies from 27 providers"/>
</dbReference>
<dbReference type="DNASU" id="3476"/>
<dbReference type="Ensembl" id="ENST00000342206.10">
    <property type="protein sequence ID" value="ENSP00000363661.5"/>
    <property type="gene ID" value="ENSG00000089289.16"/>
</dbReference>
<dbReference type="Ensembl" id="ENST00000356413.5">
    <property type="protein sequence ID" value="ENSP00000348784.4"/>
    <property type="gene ID" value="ENSG00000089289.16"/>
</dbReference>
<dbReference type="GeneID" id="3476"/>
<dbReference type="KEGG" id="hsa:3476"/>
<dbReference type="MANE-Select" id="ENST00000356413.5">
    <property type="protein sequence ID" value="ENSP00000348784.4"/>
    <property type="RefSeq nucleotide sequence ID" value="NM_001551.3"/>
    <property type="RefSeq protein sequence ID" value="NP_001542.1"/>
</dbReference>
<dbReference type="UCSC" id="uc004dxv.4">
    <property type="organism name" value="human"/>
</dbReference>
<dbReference type="AGR" id="HGNC:5461"/>
<dbReference type="CTD" id="3476"/>
<dbReference type="DisGeNET" id="3476"/>
<dbReference type="GeneCards" id="IGBP1"/>
<dbReference type="HGNC" id="HGNC:5461">
    <property type="gene designation" value="IGBP1"/>
</dbReference>
<dbReference type="HPA" id="ENSG00000089289">
    <property type="expression patterns" value="Low tissue specificity"/>
</dbReference>
<dbReference type="MalaCards" id="IGBP1"/>
<dbReference type="MIM" id="300139">
    <property type="type" value="gene"/>
</dbReference>
<dbReference type="MIM" id="300472">
    <property type="type" value="phenotype"/>
</dbReference>
<dbReference type="neXtProt" id="NX_P78318"/>
<dbReference type="OpenTargets" id="ENSG00000089289"/>
<dbReference type="Orphanet" id="52055">
    <property type="disease" value="Corpus callosum agenesis-intellectual disability-coloboma-micrognathia syndrome"/>
</dbReference>
<dbReference type="PharmGKB" id="PA29694"/>
<dbReference type="VEuPathDB" id="HostDB:ENSG00000089289"/>
<dbReference type="eggNOG" id="KOG2830">
    <property type="taxonomic scope" value="Eukaryota"/>
</dbReference>
<dbReference type="GeneTree" id="ENSGT00390000002414"/>
<dbReference type="HOGENOM" id="CLU_041824_1_0_1"/>
<dbReference type="InParanoid" id="P78318"/>
<dbReference type="OMA" id="EYELCEA"/>
<dbReference type="OrthoDB" id="10261753at2759"/>
<dbReference type="PAN-GO" id="P78318">
    <property type="GO annotations" value="3 GO annotations based on evolutionary models"/>
</dbReference>
<dbReference type="PhylomeDB" id="P78318"/>
<dbReference type="TreeFam" id="TF313433"/>
<dbReference type="PathwayCommons" id="P78318"/>
<dbReference type="SignaLink" id="P78318"/>
<dbReference type="SIGNOR" id="P78318"/>
<dbReference type="BioGRID-ORCS" id="3476">
    <property type="hits" value="423 hits in 777 CRISPR screens"/>
</dbReference>
<dbReference type="ChiTaRS" id="IGBP1">
    <property type="organism name" value="human"/>
</dbReference>
<dbReference type="EvolutionaryTrace" id="P78318"/>
<dbReference type="GeneWiki" id="IGBP1"/>
<dbReference type="GenomeRNAi" id="3476"/>
<dbReference type="Pharos" id="P78318">
    <property type="development level" value="Tbio"/>
</dbReference>
<dbReference type="PRO" id="PR:P78318"/>
<dbReference type="Proteomes" id="UP000005640">
    <property type="component" value="Chromosome X"/>
</dbReference>
<dbReference type="RNAct" id="P78318">
    <property type="molecule type" value="protein"/>
</dbReference>
<dbReference type="Bgee" id="ENSG00000089289">
    <property type="expression patterns" value="Expressed in cortical plate and 214 other cell types or tissues"/>
</dbReference>
<dbReference type="GO" id="GO:0005737">
    <property type="term" value="C:cytoplasm"/>
    <property type="evidence" value="ECO:0000303"/>
    <property type="project" value="UniProtKB"/>
</dbReference>
<dbReference type="GO" id="GO:0005829">
    <property type="term" value="C:cytosol"/>
    <property type="evidence" value="ECO:0000318"/>
    <property type="project" value="GO_Central"/>
</dbReference>
<dbReference type="GO" id="GO:0051721">
    <property type="term" value="F:protein phosphatase 2A binding"/>
    <property type="evidence" value="ECO:0000318"/>
    <property type="project" value="GO_Central"/>
</dbReference>
<dbReference type="GO" id="GO:0019888">
    <property type="term" value="F:protein phosphatase regulator activity"/>
    <property type="evidence" value="ECO:0000314"/>
    <property type="project" value="UniProtKB"/>
</dbReference>
<dbReference type="GO" id="GO:0042113">
    <property type="term" value="P:B cell activation"/>
    <property type="evidence" value="ECO:0007669"/>
    <property type="project" value="UniProtKB-KW"/>
</dbReference>
<dbReference type="GO" id="GO:0035556">
    <property type="term" value="P:intracellular signal transduction"/>
    <property type="evidence" value="ECO:0000315"/>
    <property type="project" value="UniProtKB"/>
</dbReference>
<dbReference type="GO" id="GO:0032873">
    <property type="term" value="P:negative regulation of stress-activated MAPK cascade"/>
    <property type="evidence" value="ECO:0000315"/>
    <property type="project" value="UniProtKB"/>
</dbReference>
<dbReference type="GO" id="GO:0000122">
    <property type="term" value="P:negative regulation of transcription by RNA polymerase II"/>
    <property type="evidence" value="ECO:0000315"/>
    <property type="project" value="UniProtKB"/>
</dbReference>
<dbReference type="GO" id="GO:0035303">
    <property type="term" value="P:regulation of dephosphorylation"/>
    <property type="evidence" value="ECO:0000318"/>
    <property type="project" value="GO_Central"/>
</dbReference>
<dbReference type="GO" id="GO:0060632">
    <property type="term" value="P:regulation of microtubule-based movement"/>
    <property type="evidence" value="ECO:0000315"/>
    <property type="project" value="UniProtKB"/>
</dbReference>
<dbReference type="GO" id="GO:0070555">
    <property type="term" value="P:response to interleukin-1"/>
    <property type="evidence" value="ECO:0000315"/>
    <property type="project" value="UniProtKB"/>
</dbReference>
<dbReference type="GO" id="GO:0034612">
    <property type="term" value="P:response to tumor necrosis factor"/>
    <property type="evidence" value="ECO:0000315"/>
    <property type="project" value="UniProtKB"/>
</dbReference>
<dbReference type="GO" id="GO:0007165">
    <property type="term" value="P:signal transduction"/>
    <property type="evidence" value="ECO:0000303"/>
    <property type="project" value="UniProtKB"/>
</dbReference>
<dbReference type="FunFam" id="1.25.40.540:FF:000003">
    <property type="entry name" value="Immunoglobulin (CD79A)-binding protein 1"/>
    <property type="match status" value="1"/>
</dbReference>
<dbReference type="Gene3D" id="6.10.250.1140">
    <property type="match status" value="1"/>
</dbReference>
<dbReference type="Gene3D" id="1.25.40.540">
    <property type="entry name" value="TAP42-like family"/>
    <property type="match status" value="1"/>
</dbReference>
<dbReference type="InterPro" id="IPR038511">
    <property type="entry name" value="TAP42/TAP46-like_sf"/>
</dbReference>
<dbReference type="InterPro" id="IPR007304">
    <property type="entry name" value="TAP46-like"/>
</dbReference>
<dbReference type="PANTHER" id="PTHR10933">
    <property type="entry name" value="IMMUNOGLOBULIN-BINDING PROTEIN 1"/>
    <property type="match status" value="1"/>
</dbReference>
<dbReference type="PANTHER" id="PTHR10933:SF12">
    <property type="entry name" value="IMMUNOGLOBULIN-BINDING PROTEIN 1"/>
    <property type="match status" value="1"/>
</dbReference>
<dbReference type="Pfam" id="PF04177">
    <property type="entry name" value="TAP42"/>
    <property type="match status" value="1"/>
</dbReference>
<sequence length="339" mass="39222">MAAEDELQLPRLPELFETGRQLLDEVEVATEPAGSRIVQEKVFKGLDLLEKAAEMLSQLDLFSRNEDLEEIASTDLKYLLVPAFQGALTMKQVNPSKRLDHLQRAREHFINYLTQCHCYHVAEFELPKTMNNSAENHTANSSMAYPSLVAMASQRQAKIQRYKQKKELEHRLSAMKSAVESGQADDERVREYYLLHLQRWIDISLEEIESIDQEIKILRERDSSREASTSNSSRQERPPVKPFILTRNMAQAKVFGAGYPSLPTMTVSDWYEQHRKYGALPDQGIAKAAPEEFRKAAQQQEEQEEKEEEDDEQTLHRAREWDDWKDTHPRGYGNRQNMG</sequence>
<evidence type="ECO:0000250" key="1"/>
<evidence type="ECO:0000256" key="2">
    <source>
        <dbReference type="SAM" id="MobiDB-lite"/>
    </source>
</evidence>
<evidence type="ECO:0000269" key="3">
    <source>
    </source>
</evidence>
<evidence type="ECO:0000269" key="4">
    <source>
    </source>
</evidence>
<evidence type="ECO:0000269" key="5">
    <source>
    </source>
</evidence>
<evidence type="ECO:0000269" key="6">
    <source>
    </source>
</evidence>
<evidence type="ECO:0000269" key="7">
    <source>
    </source>
</evidence>
<evidence type="ECO:0000269" key="8">
    <source>
    </source>
</evidence>
<evidence type="ECO:0000269" key="9">
    <source>
    </source>
</evidence>
<evidence type="ECO:0000305" key="10"/>
<evidence type="ECO:0007744" key="11">
    <source>
    </source>
</evidence>
<evidence type="ECO:0007744" key="12">
    <source>
    </source>
</evidence>
<evidence type="ECO:0007744" key="13">
    <source>
    </source>
</evidence>
<evidence type="ECO:0007829" key="14">
    <source>
        <dbReference type="PDB" id="4IYP"/>
    </source>
</evidence>
<comment type="function">
    <text evidence="5 8">Associated to surface IgM-receptor; may be involved in signal transduction. Involved in regulation of the catalytic activity of the phosphatases PP2A, PP4 and PP6 by protecting their partially folded catalytic subunits from degradative polyubiquitination until they associate with regulatory subunits.</text>
</comment>
<comment type="subunit">
    <text evidence="3 5 6 8 9">Interacts with partially folded PPP2CA, but not with the fully active protein. Interacts with PPP2CB, and with PP4 and PP6. Interacts with MID1 and MID2. Interacts with ubiquitin.</text>
</comment>
<comment type="interaction">
    <interactant intactId="EBI-1055954">
        <id>P78318</id>
    </interactant>
    <interactant intactId="EBI-352682">
        <id>P04792</id>
        <label>HSPB1</label>
    </interactant>
    <organismsDiffer>false</organismsDiffer>
    <experiments>3</experiments>
</comment>
<comment type="interaction">
    <interactant intactId="EBI-1055954">
        <id>P78318</id>
    </interactant>
    <interactant intactId="EBI-399080">
        <id>Q92993</id>
        <label>KAT5</label>
    </interactant>
    <organismsDiffer>false</organismsDiffer>
    <experiments>3</experiments>
</comment>
<comment type="interaction">
    <interactant intactId="EBI-1055954">
        <id>P78318</id>
    </interactant>
    <interactant intactId="EBI-11742507">
        <id>Q8TAP4-4</id>
        <label>LMO3</label>
    </interactant>
    <organismsDiffer>false</organismsDiffer>
    <experiments>3</experiments>
</comment>
<comment type="interaction">
    <interactant intactId="EBI-1055954">
        <id>P78318</id>
    </interactant>
    <interactant intactId="EBI-2340316">
        <id>O15344</id>
        <label>MID1</label>
    </interactant>
    <organismsDiffer>false</organismsDiffer>
    <experiments>5</experiments>
</comment>
<comment type="interaction">
    <interactant intactId="EBI-1055954">
        <id>P78318</id>
    </interactant>
    <interactant intactId="EBI-712311">
        <id>P67775</id>
        <label>PPP2CA</label>
    </interactant>
    <organismsDiffer>false</organismsDiffer>
    <experiments>20</experiments>
</comment>
<comment type="interaction">
    <interactant intactId="EBI-1055954">
        <id>P78318</id>
    </interactant>
    <interactant intactId="EBI-1044367">
        <id>P62714</id>
        <label>PPP2CB</label>
    </interactant>
    <organismsDiffer>false</organismsDiffer>
    <experiments>8</experiments>
</comment>
<comment type="interaction">
    <interactant intactId="EBI-1055954">
        <id>P78318</id>
    </interactant>
    <interactant intactId="EBI-1046072">
        <id>P60510</id>
        <label>PPP4C</label>
    </interactant>
    <organismsDiffer>false</organismsDiffer>
    <experiments>17</experiments>
</comment>
<comment type="interaction">
    <interactant intactId="EBI-1055954">
        <id>P78318</id>
    </interactant>
    <interactant intactId="EBI-359751">
        <id>O00743</id>
        <label>PPP6C</label>
    </interactant>
    <organismsDiffer>false</organismsDiffer>
    <experiments>19</experiments>
</comment>
<comment type="interaction">
    <interactant intactId="EBI-1055954">
        <id>P78318</id>
    </interactant>
    <interactant intactId="EBI-9090795">
        <id>Q15047-2</id>
        <label>SETDB1</label>
    </interactant>
    <organismsDiffer>false</organismsDiffer>
    <experiments>3</experiments>
</comment>
<comment type="interaction">
    <interactant intactId="EBI-1055954">
        <id>P78318</id>
    </interactant>
    <interactant intactId="EBI-12825957">
        <id>O15266-2</id>
        <label>SHOX</label>
    </interactant>
    <organismsDiffer>false</organismsDiffer>
    <experiments>3</experiments>
</comment>
<comment type="interaction">
    <interactant intactId="EBI-1055954">
        <id>P78318</id>
    </interactant>
    <interactant intactId="EBI-1054735">
        <id>O75663</id>
        <label>TIPRL</label>
    </interactant>
    <organismsDiffer>false</organismsDiffer>
    <experiments>2</experiments>
</comment>
<comment type="interaction">
    <interactant intactId="EBI-1055954">
        <id>P78318</id>
    </interactant>
    <interactant intactId="EBI-359832">
        <id>P61981</id>
        <label>YWHAG</label>
    </interactant>
    <organismsDiffer>false</organismsDiffer>
    <experiments>3</experiments>
</comment>
<comment type="subcellular location">
    <subcellularLocation>
        <location evidence="10">Cytoplasm</location>
    </subcellularLocation>
</comment>
<comment type="tissue specificity">
    <text>Ubiquitously expressed with highest levels in heart, skeletal muscle and pancreas.</text>
</comment>
<comment type="domain">
    <text evidence="1">The UIM domain is required for protective effect on PP2A.</text>
</comment>
<comment type="PTM">
    <text evidence="1">Phosphorylated.</text>
</comment>
<comment type="PTM">
    <text evidence="7">Monoubiquitination by MID1 triggers calpain-mediated cleavage and switches IGBP1 activity from protective to destructive.</text>
</comment>
<comment type="disease" evidence="4">
    <disease id="DI-00053">
        <name>Intellectual developmental disorder, X-linked, syndromic 28</name>
        <acronym>MRXS28</acronym>
        <description>An intellectual disability syndrome characterized by agenesis of the corpus callosum, coloboma of the iris and optic nerve, severe retrognathia, and intellectual deficit. Intellectual disability is defined by significantly below average general intellectual functioning associated with impairments in adaptive behavior and manifested during the developmental period.</description>
        <dbReference type="MIM" id="300472"/>
    </disease>
    <text>The disease is caused by variants affecting the gene represented in this entry.</text>
</comment>
<comment type="similarity">
    <text evidence="10">Belongs to the IGBP1/TAP42 family.</text>
</comment>
<proteinExistence type="evidence at protein level"/>
<protein>
    <recommendedName>
        <fullName>Immunoglobulin-binding protein 1</fullName>
    </recommendedName>
    <alternativeName>
        <fullName>B-cell signal transduction molecule alpha 4</fullName>
        <shortName>Protein alpha-4</shortName>
    </alternativeName>
    <alternativeName>
        <fullName>CD79a-binding protein 1</fullName>
    </alternativeName>
    <alternativeName>
        <fullName>Protein phosphatase 2/4/6 regulatory subunit</fullName>
    </alternativeName>
    <alternativeName>
        <fullName>Renal carcinoma antigen NY-REN-16</fullName>
    </alternativeName>
</protein>
<name>IGBP1_HUMAN</name>
<reference key="1">
    <citation type="journal article" date="1997" name="Genomics">
        <title>Expression and chromosomal localization of the human alpha 4/IGBP1 gene, the structure of which is closely related to the yeast TAP42 protein of the rapamycin-sensitive signal transduction pathway.</title>
        <authorList>
            <person name="Onda M."/>
            <person name="Inui S."/>
            <person name="Maeda K."/>
            <person name="Suzuki M."/>
            <person name="Takahashi E."/>
            <person name="Sakaguchi N."/>
        </authorList>
    </citation>
    <scope>NUCLEOTIDE SEQUENCE [MRNA]</scope>
    <source>
        <tissue>B-cell</tissue>
    </source>
</reference>
<reference key="2">
    <citation type="submission" date="2003-05" db="EMBL/GenBank/DDBJ databases">
        <title>Cloning of human full-length CDSs in BD Creator(TM) system donor vector.</title>
        <authorList>
            <person name="Kalnine N."/>
            <person name="Chen X."/>
            <person name="Rolfs A."/>
            <person name="Halleck A."/>
            <person name="Hines L."/>
            <person name="Eisenstein S."/>
            <person name="Koundinya M."/>
            <person name="Raphael J."/>
            <person name="Moreira D."/>
            <person name="Kelley T."/>
            <person name="LaBaer J."/>
            <person name="Lin Y."/>
            <person name="Phelan M."/>
            <person name="Farmer A."/>
        </authorList>
    </citation>
    <scope>NUCLEOTIDE SEQUENCE [LARGE SCALE MRNA]</scope>
</reference>
<reference key="3">
    <citation type="journal article" date="2005" name="Nature">
        <title>The DNA sequence of the human X chromosome.</title>
        <authorList>
            <person name="Ross M.T."/>
            <person name="Grafham D.V."/>
            <person name="Coffey A.J."/>
            <person name="Scherer S."/>
            <person name="McLay K."/>
            <person name="Muzny D."/>
            <person name="Platzer M."/>
            <person name="Howell G.R."/>
            <person name="Burrows C."/>
            <person name="Bird C.P."/>
            <person name="Frankish A."/>
            <person name="Lovell F.L."/>
            <person name="Howe K.L."/>
            <person name="Ashurst J.L."/>
            <person name="Fulton R.S."/>
            <person name="Sudbrak R."/>
            <person name="Wen G."/>
            <person name="Jones M.C."/>
            <person name="Hurles M.E."/>
            <person name="Andrews T.D."/>
            <person name="Scott C.E."/>
            <person name="Searle S."/>
            <person name="Ramser J."/>
            <person name="Whittaker A."/>
            <person name="Deadman R."/>
            <person name="Carter N.P."/>
            <person name="Hunt S.E."/>
            <person name="Chen R."/>
            <person name="Cree A."/>
            <person name="Gunaratne P."/>
            <person name="Havlak P."/>
            <person name="Hodgson A."/>
            <person name="Metzker M.L."/>
            <person name="Richards S."/>
            <person name="Scott G."/>
            <person name="Steffen D."/>
            <person name="Sodergren E."/>
            <person name="Wheeler D.A."/>
            <person name="Worley K.C."/>
            <person name="Ainscough R."/>
            <person name="Ambrose K.D."/>
            <person name="Ansari-Lari M.A."/>
            <person name="Aradhya S."/>
            <person name="Ashwell R.I."/>
            <person name="Babbage A.K."/>
            <person name="Bagguley C.L."/>
            <person name="Ballabio A."/>
            <person name="Banerjee R."/>
            <person name="Barker G.E."/>
            <person name="Barlow K.F."/>
            <person name="Barrett I.P."/>
            <person name="Bates K.N."/>
            <person name="Beare D.M."/>
            <person name="Beasley H."/>
            <person name="Beasley O."/>
            <person name="Beck A."/>
            <person name="Bethel G."/>
            <person name="Blechschmidt K."/>
            <person name="Brady N."/>
            <person name="Bray-Allen S."/>
            <person name="Bridgeman A.M."/>
            <person name="Brown A.J."/>
            <person name="Brown M.J."/>
            <person name="Bonnin D."/>
            <person name="Bruford E.A."/>
            <person name="Buhay C."/>
            <person name="Burch P."/>
            <person name="Burford D."/>
            <person name="Burgess J."/>
            <person name="Burrill W."/>
            <person name="Burton J."/>
            <person name="Bye J.M."/>
            <person name="Carder C."/>
            <person name="Carrel L."/>
            <person name="Chako J."/>
            <person name="Chapman J.C."/>
            <person name="Chavez D."/>
            <person name="Chen E."/>
            <person name="Chen G."/>
            <person name="Chen Y."/>
            <person name="Chen Z."/>
            <person name="Chinault C."/>
            <person name="Ciccodicola A."/>
            <person name="Clark S.Y."/>
            <person name="Clarke G."/>
            <person name="Clee C.M."/>
            <person name="Clegg S."/>
            <person name="Clerc-Blankenburg K."/>
            <person name="Clifford K."/>
            <person name="Cobley V."/>
            <person name="Cole C.G."/>
            <person name="Conquer J.S."/>
            <person name="Corby N."/>
            <person name="Connor R.E."/>
            <person name="David R."/>
            <person name="Davies J."/>
            <person name="Davis C."/>
            <person name="Davis J."/>
            <person name="Delgado O."/>
            <person name="Deshazo D."/>
            <person name="Dhami P."/>
            <person name="Ding Y."/>
            <person name="Dinh H."/>
            <person name="Dodsworth S."/>
            <person name="Draper H."/>
            <person name="Dugan-Rocha S."/>
            <person name="Dunham A."/>
            <person name="Dunn M."/>
            <person name="Durbin K.J."/>
            <person name="Dutta I."/>
            <person name="Eades T."/>
            <person name="Ellwood M."/>
            <person name="Emery-Cohen A."/>
            <person name="Errington H."/>
            <person name="Evans K.L."/>
            <person name="Faulkner L."/>
            <person name="Francis F."/>
            <person name="Frankland J."/>
            <person name="Fraser A.E."/>
            <person name="Galgoczy P."/>
            <person name="Gilbert J."/>
            <person name="Gill R."/>
            <person name="Gloeckner G."/>
            <person name="Gregory S.G."/>
            <person name="Gribble S."/>
            <person name="Griffiths C."/>
            <person name="Grocock R."/>
            <person name="Gu Y."/>
            <person name="Gwilliam R."/>
            <person name="Hamilton C."/>
            <person name="Hart E.A."/>
            <person name="Hawes A."/>
            <person name="Heath P.D."/>
            <person name="Heitmann K."/>
            <person name="Hennig S."/>
            <person name="Hernandez J."/>
            <person name="Hinzmann B."/>
            <person name="Ho S."/>
            <person name="Hoffs M."/>
            <person name="Howden P.J."/>
            <person name="Huckle E.J."/>
            <person name="Hume J."/>
            <person name="Hunt P.J."/>
            <person name="Hunt A.R."/>
            <person name="Isherwood J."/>
            <person name="Jacob L."/>
            <person name="Johnson D."/>
            <person name="Jones S."/>
            <person name="de Jong P.J."/>
            <person name="Joseph S.S."/>
            <person name="Keenan S."/>
            <person name="Kelly S."/>
            <person name="Kershaw J.K."/>
            <person name="Khan Z."/>
            <person name="Kioschis P."/>
            <person name="Klages S."/>
            <person name="Knights A.J."/>
            <person name="Kosiura A."/>
            <person name="Kovar-Smith C."/>
            <person name="Laird G.K."/>
            <person name="Langford C."/>
            <person name="Lawlor S."/>
            <person name="Leversha M."/>
            <person name="Lewis L."/>
            <person name="Liu W."/>
            <person name="Lloyd C."/>
            <person name="Lloyd D.M."/>
            <person name="Loulseged H."/>
            <person name="Loveland J.E."/>
            <person name="Lovell J.D."/>
            <person name="Lozado R."/>
            <person name="Lu J."/>
            <person name="Lyne R."/>
            <person name="Ma J."/>
            <person name="Maheshwari M."/>
            <person name="Matthews L.H."/>
            <person name="McDowall J."/>
            <person name="McLaren S."/>
            <person name="McMurray A."/>
            <person name="Meidl P."/>
            <person name="Meitinger T."/>
            <person name="Milne S."/>
            <person name="Miner G."/>
            <person name="Mistry S.L."/>
            <person name="Morgan M."/>
            <person name="Morris S."/>
            <person name="Mueller I."/>
            <person name="Mullikin J.C."/>
            <person name="Nguyen N."/>
            <person name="Nordsiek G."/>
            <person name="Nyakatura G."/>
            <person name="O'dell C.N."/>
            <person name="Okwuonu G."/>
            <person name="Palmer S."/>
            <person name="Pandian R."/>
            <person name="Parker D."/>
            <person name="Parrish J."/>
            <person name="Pasternak S."/>
            <person name="Patel D."/>
            <person name="Pearce A.V."/>
            <person name="Pearson D.M."/>
            <person name="Pelan S.E."/>
            <person name="Perez L."/>
            <person name="Porter K.M."/>
            <person name="Ramsey Y."/>
            <person name="Reichwald K."/>
            <person name="Rhodes S."/>
            <person name="Ridler K.A."/>
            <person name="Schlessinger D."/>
            <person name="Schueler M.G."/>
            <person name="Sehra H.K."/>
            <person name="Shaw-Smith C."/>
            <person name="Shen H."/>
            <person name="Sheridan E.M."/>
            <person name="Shownkeen R."/>
            <person name="Skuce C.D."/>
            <person name="Smith M.L."/>
            <person name="Sotheran E.C."/>
            <person name="Steingruber H.E."/>
            <person name="Steward C.A."/>
            <person name="Storey R."/>
            <person name="Swann R.M."/>
            <person name="Swarbreck D."/>
            <person name="Tabor P.E."/>
            <person name="Taudien S."/>
            <person name="Taylor T."/>
            <person name="Teague B."/>
            <person name="Thomas K."/>
            <person name="Thorpe A."/>
            <person name="Timms K."/>
            <person name="Tracey A."/>
            <person name="Trevanion S."/>
            <person name="Tromans A.C."/>
            <person name="d'Urso M."/>
            <person name="Verduzco D."/>
            <person name="Villasana D."/>
            <person name="Waldron L."/>
            <person name="Wall M."/>
            <person name="Wang Q."/>
            <person name="Warren J."/>
            <person name="Warry G.L."/>
            <person name="Wei X."/>
            <person name="West A."/>
            <person name="Whitehead S.L."/>
            <person name="Whiteley M.N."/>
            <person name="Wilkinson J.E."/>
            <person name="Willey D.L."/>
            <person name="Williams G."/>
            <person name="Williams L."/>
            <person name="Williamson A."/>
            <person name="Williamson H."/>
            <person name="Wilming L."/>
            <person name="Woodmansey R.L."/>
            <person name="Wray P.W."/>
            <person name="Yen J."/>
            <person name="Zhang J."/>
            <person name="Zhou J."/>
            <person name="Zoghbi H."/>
            <person name="Zorilla S."/>
            <person name="Buck D."/>
            <person name="Reinhardt R."/>
            <person name="Poustka A."/>
            <person name="Rosenthal A."/>
            <person name="Lehrach H."/>
            <person name="Meindl A."/>
            <person name="Minx P.J."/>
            <person name="Hillier L.W."/>
            <person name="Willard H.F."/>
            <person name="Wilson R.K."/>
            <person name="Waterston R.H."/>
            <person name="Rice C.M."/>
            <person name="Vaudin M."/>
            <person name="Coulson A."/>
            <person name="Nelson D.L."/>
            <person name="Weinstock G."/>
            <person name="Sulston J.E."/>
            <person name="Durbin R.M."/>
            <person name="Hubbard T."/>
            <person name="Gibbs R.A."/>
            <person name="Beck S."/>
            <person name="Rogers J."/>
            <person name="Bentley D.R."/>
        </authorList>
    </citation>
    <scope>NUCLEOTIDE SEQUENCE [LARGE SCALE GENOMIC DNA]</scope>
</reference>
<reference key="4">
    <citation type="journal article" date="2004" name="Genome Res.">
        <title>The status, quality, and expansion of the NIH full-length cDNA project: the Mammalian Gene Collection (MGC).</title>
        <authorList>
            <consortium name="The MGC Project Team"/>
        </authorList>
    </citation>
    <scope>NUCLEOTIDE SEQUENCE [LARGE SCALE MRNA]</scope>
    <source>
        <tissue>Placenta</tissue>
    </source>
</reference>
<reference key="5">
    <citation type="journal article" date="1998" name="Biochem. Biophys. Res. Commun.">
        <title>Alpha 4 associates with protein phosphatases 2A, 4, and 6.</title>
        <authorList>
            <person name="Chen J."/>
            <person name="Peterson R.T."/>
            <person name="Schreiber S.L."/>
        </authorList>
    </citation>
    <scope>INTERACTION WITH SERINE/THREONINE PROTEIN PHOSPHATASES</scope>
</reference>
<reference key="6">
    <citation type="journal article" date="1999" name="Int. J. Cancer">
        <title>Antigens recognized by autologous antibody in patients with renal-cell carcinoma.</title>
        <authorList>
            <person name="Scanlan M.J."/>
            <person name="Gordan J.D."/>
            <person name="Williamson B."/>
            <person name="Stockert E."/>
            <person name="Bander N.H."/>
            <person name="Jongeneel C.V."/>
            <person name="Gure A.O."/>
            <person name="Jaeger D."/>
            <person name="Jaeger E."/>
            <person name="Knuth A."/>
            <person name="Chen Y.-T."/>
            <person name="Old L.J."/>
        </authorList>
    </citation>
    <scope>IDENTIFICATION AS A RENAL CANCER ANTIGEN</scope>
    <source>
        <tissue>Renal cell carcinoma</tissue>
    </source>
</reference>
<reference key="7">
    <citation type="journal article" date="2002" name="BMC Cell Biol.">
        <title>MID1 and MID2 homo- and heterodimerise to tether the rapamycin-sensitive PP2A regulatory subunit, Alpha 4, to microtubules: implications for the clinical variability of X-linked Opitz GBBB syndrome and other developmental disorders.</title>
        <authorList>
            <person name="Short K.M."/>
            <person name="Hopwood B."/>
            <person name="Yi Z."/>
            <person name="Cox T.C."/>
        </authorList>
    </citation>
    <scope>INTERACTION WITH MID1 AND MID2</scope>
</reference>
<reference key="8">
    <citation type="journal article" date="2003" name="Am. J. Med. Genet. A">
        <title>A new X-linked syndrome with agenesis of the corpus callosum, mental retardation, coloboma, micrognathia, and a mutation in the alpha 4 gene at Xq13.</title>
        <authorList>
            <person name="Graham J.M. Jr."/>
            <person name="Wheeler P."/>
            <person name="Tackels-Horne D."/>
            <person name="Lin A.E."/>
            <person name="Hall B.D."/>
            <person name="May M."/>
            <person name="Short K.M."/>
            <person name="Schwartz C.E."/>
            <person name="Cox T.C."/>
        </authorList>
    </citation>
    <scope>INVOLVEMENT IN MRXS28</scope>
</reference>
<reference key="9">
    <citation type="journal article" date="2009" name="Anal. Chem.">
        <title>Lys-N and trypsin cover complementary parts of the phosphoproteome in a refined SCX-based approach.</title>
        <authorList>
            <person name="Gauci S."/>
            <person name="Helbig A.O."/>
            <person name="Slijper M."/>
            <person name="Krijgsveld J."/>
            <person name="Heck A.J."/>
            <person name="Mohammed S."/>
        </authorList>
    </citation>
    <scope>ACETYLATION [LARGE SCALE ANALYSIS] AT ALA-2</scope>
    <scope>CLEAVAGE OF INITIATOR METHIONINE [LARGE SCALE ANALYSIS]</scope>
    <scope>IDENTIFICATION BY MASS SPECTROMETRY [LARGE SCALE ANALYSIS]</scope>
</reference>
<reference key="10">
    <citation type="journal article" date="2009" name="Mol. Cell">
        <title>Alpha4 is an essential regulator of PP2A phosphatase activity.</title>
        <authorList>
            <person name="Kong M."/>
            <person name="Ditsworth D."/>
            <person name="Lindsten T."/>
            <person name="Thompson C.B."/>
        </authorList>
    </citation>
    <scope>FUNCTION</scope>
    <scope>INTERACTION WITH PPP2CA</scope>
</reference>
<reference key="11">
    <citation type="journal article" date="2009" name="Science">
        <title>Lysine acetylation targets protein complexes and co-regulates major cellular functions.</title>
        <authorList>
            <person name="Choudhary C."/>
            <person name="Kumar C."/>
            <person name="Gnad F."/>
            <person name="Nielsen M.L."/>
            <person name="Rehman M."/>
            <person name="Walther T.C."/>
            <person name="Olsen J.V."/>
            <person name="Mann M."/>
        </authorList>
    </citation>
    <scope>ACETYLATION [LARGE SCALE ANALYSIS] AT LYS-241</scope>
    <scope>IDENTIFICATION BY MASS SPECTROMETRY [LARGE SCALE ANALYSIS]</scope>
</reference>
<reference key="12">
    <citation type="journal article" date="2010" name="Biochemistry">
        <title>Alpha4 is a ubiquitin-binding protein that regulates protein serine/threonine phosphatase 2A ubiquitination.</title>
        <authorList>
            <person name="McConnell J.L."/>
            <person name="Watkins G.R."/>
            <person name="Soss S.E."/>
            <person name="Franz H.S."/>
            <person name="McCorvey L.R."/>
            <person name="Spiller B.W."/>
            <person name="Chazin W.J."/>
            <person name="Wadzinski B.E."/>
        </authorList>
    </citation>
    <scope>UBIQUITINATION</scope>
    <scope>INTERACTION WITH PPP2CA AND UBIQUITIN</scope>
</reference>
<reference key="13">
    <citation type="journal article" date="2011" name="BMC Syst. Biol.">
        <title>Initial characterization of the human central proteome.</title>
        <authorList>
            <person name="Burkard T.R."/>
            <person name="Planyavsky M."/>
            <person name="Kaupe I."/>
            <person name="Breitwieser F.P."/>
            <person name="Buerckstuemmer T."/>
            <person name="Bennett K.L."/>
            <person name="Superti-Furga G."/>
            <person name="Colinge J."/>
        </authorList>
    </citation>
    <scope>IDENTIFICATION BY MASS SPECTROMETRY [LARGE SCALE ANALYSIS]</scope>
</reference>
<reference key="14">
    <citation type="journal article" date="2012" name="J. Biol. Chem.">
        <title>Monoubiquitination promotes calpain cleavage of the protein phosphatase 2A (PP2A) regulatory subunit alpha4, altering PP2A stability and microtubule-associated protein phosphorylation.</title>
        <authorList>
            <person name="Watkins G.R."/>
            <person name="Wang N."/>
            <person name="Mazalouskas M.D."/>
            <person name="Gomez R.J."/>
            <person name="Guthrie C.R."/>
            <person name="Kraemer B.C."/>
            <person name="Schweiger S."/>
            <person name="Spiller B.W."/>
            <person name="Wadzinski B.E."/>
        </authorList>
    </citation>
    <scope>UBIQUITINATION BY MID1</scope>
    <scope>PROTEOLYTIC CLEAVAGE</scope>
</reference>
<reference key="15">
    <citation type="journal article" date="2012" name="Proc. Natl. Acad. Sci. U.S.A.">
        <title>N-terminal acetylome analyses and functional insights of the N-terminal acetyltransferase NatB.</title>
        <authorList>
            <person name="Van Damme P."/>
            <person name="Lasa M."/>
            <person name="Polevoda B."/>
            <person name="Gazquez C."/>
            <person name="Elosegui-Artola A."/>
            <person name="Kim D.S."/>
            <person name="De Juan-Pardo E."/>
            <person name="Demeyer K."/>
            <person name="Hole K."/>
            <person name="Larrea E."/>
            <person name="Timmerman E."/>
            <person name="Prieto J."/>
            <person name="Arnesen T."/>
            <person name="Sherman F."/>
            <person name="Gevaert K."/>
            <person name="Aldabe R."/>
        </authorList>
    </citation>
    <scope>ACETYLATION [LARGE SCALE ANALYSIS] AT ALA-2</scope>
    <scope>CLEAVAGE OF INITIATOR METHIONINE [LARGE SCALE ANALYSIS]</scope>
    <scope>IDENTIFICATION BY MASS SPECTROMETRY [LARGE SCALE ANALYSIS]</scope>
</reference>
<reference key="16">
    <citation type="journal article" date="2013" name="Nat. Commun.">
        <title>Structural basis of protein phosphatase 2A stable latency.</title>
        <authorList>
            <person name="Jiang L."/>
            <person name="Stanevich V."/>
            <person name="Satyshur K.A."/>
            <person name="Kong M."/>
            <person name="Watkins G.R."/>
            <person name="Wadzinski B.E."/>
            <person name="Sengupta R."/>
            <person name="Xing Y."/>
        </authorList>
    </citation>
    <scope>X-RAY CRYSTALLOGRAPHY (2.8 ANGSTROMS) OF 1-234 IN COMPLEX WITH PPP2CA</scope>
    <scope>FUNCTION</scope>
    <scope>MUTAGENESIS OF ARG-155; LYS-158; TYR-162 AND GLU-214</scope>
    <scope>INTERACTION WITH PPP2CA</scope>
</reference>
<keyword id="KW-0002">3D-structure</keyword>
<keyword id="KW-0007">Acetylation</keyword>
<keyword id="KW-0075">B-cell activation</keyword>
<keyword id="KW-0143">Chaperone</keyword>
<keyword id="KW-0963">Cytoplasm</keyword>
<keyword id="KW-0991">Intellectual disability</keyword>
<keyword id="KW-0597">Phosphoprotein</keyword>
<keyword id="KW-1267">Proteomics identification</keyword>
<keyword id="KW-1185">Reference proteome</keyword>
<keyword id="KW-0832">Ubl conjugation</keyword>
<feature type="initiator methionine" description="Removed" evidence="11 13">
    <location>
        <position position="1"/>
    </location>
</feature>
<feature type="chain" id="PRO_0000218618" description="Immunoglobulin-binding protein 1">
    <location>
        <begin position="2"/>
        <end position="339"/>
    </location>
</feature>
<feature type="domain" description="UIM" evidence="10">
    <location>
        <begin position="46"/>
        <end position="60"/>
    </location>
</feature>
<feature type="region of interest" description="Interaction with PPP2CA">
    <location>
        <begin position="98"/>
        <end position="202"/>
    </location>
</feature>
<feature type="region of interest" description="Disordered" evidence="2">
    <location>
        <begin position="221"/>
        <end position="243"/>
    </location>
</feature>
<feature type="region of interest" description="Interaction with MID1" evidence="3">
    <location>
        <begin position="225"/>
        <end position="290"/>
    </location>
</feature>
<feature type="region of interest" description="Disordered" evidence="2">
    <location>
        <begin position="289"/>
        <end position="339"/>
    </location>
</feature>
<feature type="compositionally biased region" description="Acidic residues" evidence="2">
    <location>
        <begin position="301"/>
        <end position="312"/>
    </location>
</feature>
<feature type="compositionally biased region" description="Basic and acidic residues" evidence="2">
    <location>
        <begin position="313"/>
        <end position="329"/>
    </location>
</feature>
<feature type="site" description="Cleavage; by calpain">
    <location>
        <begin position="255"/>
        <end position="256"/>
    </location>
</feature>
<feature type="modified residue" description="N-acetylalanine" evidence="11 13">
    <location>
        <position position="2"/>
    </location>
</feature>
<feature type="modified residue" description="N6-acetyllysine" evidence="12">
    <location>
        <position position="241"/>
    </location>
</feature>
<feature type="sequence variant" id="VAR_049570" description="In dbSNP:rs6625580.">
    <original>R</original>
    <variation>K</variation>
    <location>
        <position position="20"/>
    </location>
</feature>
<feature type="mutagenesis site" description="Abolishes interaction with PPP2CA." evidence="8">
    <original>R</original>
    <variation>E</variation>
    <location>
        <position position="155"/>
    </location>
</feature>
<feature type="mutagenesis site" description="Abolishes interaction with PPP2CA." evidence="8">
    <original>K</original>
    <variation>D</variation>
    <location>
        <position position="158"/>
    </location>
</feature>
<feature type="mutagenesis site" description="Abolishes interaction with PPP2CA." evidence="8">
    <original>Y</original>
    <variation>D</variation>
    <location>
        <position position="162"/>
    </location>
</feature>
<feature type="mutagenesis site" description="Abolishes interaction with PPP2CA." evidence="8">
    <original>E</original>
    <variation>R</variation>
    <location>
        <position position="214"/>
    </location>
</feature>
<feature type="helix" evidence="14">
    <location>
        <begin position="2"/>
        <end position="5"/>
    </location>
</feature>
<feature type="helix" evidence="14">
    <location>
        <begin position="12"/>
        <end position="27"/>
    </location>
</feature>
<feature type="helix" evidence="14">
    <location>
        <begin position="36"/>
        <end position="59"/>
    </location>
</feature>
<feature type="helix" evidence="14">
    <location>
        <begin position="68"/>
        <end position="70"/>
    </location>
</feature>
<feature type="turn" evidence="14">
    <location>
        <begin position="73"/>
        <end position="75"/>
    </location>
</feature>
<feature type="helix" evidence="14">
    <location>
        <begin position="76"/>
        <end position="80"/>
    </location>
</feature>
<feature type="helix" evidence="14">
    <location>
        <begin position="81"/>
        <end position="90"/>
    </location>
</feature>
<feature type="helix" evidence="14">
    <location>
        <begin position="95"/>
        <end position="97"/>
    </location>
</feature>
<feature type="helix" evidence="14">
    <location>
        <begin position="98"/>
        <end position="118"/>
    </location>
</feature>
<feature type="strand" evidence="14">
    <location>
        <begin position="143"/>
        <end position="145"/>
    </location>
</feature>
<feature type="helix" evidence="14">
    <location>
        <begin position="156"/>
        <end position="180"/>
    </location>
</feature>
<feature type="helix" evidence="14">
    <location>
        <begin position="186"/>
        <end position="219"/>
    </location>
</feature>
<gene>
    <name type="primary">IGBP1</name>
    <name type="synonym">IBP1</name>
</gene>
<accession>P78318</accession>
<accession>Q8TAB2</accession>